<comment type="function">
    <text evidence="1">Involved in the import of nuclear-targeted proteins into the nucleus and the export of poly(A) RNA out of the nucleus. Has a role in the endoplasmic reticulum-associated degradation (ERAD) pathway (By similarity).</text>
</comment>
<comment type="subcellular location">
    <subcellularLocation>
        <location evidence="1">Cytoplasm</location>
        <location evidence="1">Perinuclear region</location>
    </subcellularLocation>
    <subcellularLocation>
        <location evidence="1">Endoplasmic reticulum membrane</location>
        <topology evidence="1">Peripheral membrane protein</topology>
        <orientation evidence="1">Cytoplasmic side</orientation>
    </subcellularLocation>
    <subcellularLocation>
        <location evidence="1">Nucleus membrane</location>
        <topology evidence="1">Peripheral membrane protein</topology>
        <orientation evidence="1">Cytoplasmic side</orientation>
    </subcellularLocation>
    <text evidence="1">Localizes mainly at the nuclear periphery and the endoplasmic reticulum membrane.</text>
</comment>
<comment type="similarity">
    <text evidence="3">Belongs to the NPL4 family.</text>
</comment>
<feature type="chain" id="PRO_0000339457" description="Nuclear protein localization protein 4">
    <location>
        <begin position="1"/>
        <end position="563"/>
    </location>
</feature>
<feature type="domain" description="MPN" evidence="2">
    <location>
        <begin position="231"/>
        <end position="373"/>
    </location>
</feature>
<name>NPL4_YARLI</name>
<dbReference type="EMBL" id="CR382131">
    <property type="protein sequence ID" value="CAG79486.2"/>
    <property type="molecule type" value="Genomic_DNA"/>
</dbReference>
<dbReference type="RefSeq" id="XP_503893.2">
    <property type="nucleotide sequence ID" value="XM_503893.2"/>
</dbReference>
<dbReference type="SMR" id="Q6C619"/>
<dbReference type="FunCoup" id="Q6C619">
    <property type="interactions" value="974"/>
</dbReference>
<dbReference type="STRING" id="284591.Q6C619"/>
<dbReference type="EnsemblFungi" id="CAG79486">
    <property type="protein sequence ID" value="CAG79486"/>
    <property type="gene ID" value="YALI0_E13233g"/>
</dbReference>
<dbReference type="KEGG" id="yli:2912023"/>
<dbReference type="VEuPathDB" id="FungiDB:YALI0_E13233g"/>
<dbReference type="HOGENOM" id="CLU_017172_0_0_1"/>
<dbReference type="InParanoid" id="Q6C619"/>
<dbReference type="OMA" id="KWSRTGR"/>
<dbReference type="OrthoDB" id="103341at4891"/>
<dbReference type="Proteomes" id="UP000001300">
    <property type="component" value="Chromosome E"/>
</dbReference>
<dbReference type="GO" id="GO:0036266">
    <property type="term" value="C:Cdc48p-Npl4p-Vms1p AAA ATPase complex"/>
    <property type="evidence" value="ECO:0007669"/>
    <property type="project" value="EnsemblFungi"/>
</dbReference>
<dbReference type="GO" id="GO:0000837">
    <property type="term" value="C:Doa10p ubiquitin ligase complex"/>
    <property type="evidence" value="ECO:0007669"/>
    <property type="project" value="EnsemblFungi"/>
</dbReference>
<dbReference type="GO" id="GO:0000839">
    <property type="term" value="C:Hrd1p ubiquitin ligase ERAD-L complex"/>
    <property type="evidence" value="ECO:0007669"/>
    <property type="project" value="EnsemblFungi"/>
</dbReference>
<dbReference type="GO" id="GO:0031965">
    <property type="term" value="C:nuclear membrane"/>
    <property type="evidence" value="ECO:0007669"/>
    <property type="project" value="UniProtKB-SubCell"/>
</dbReference>
<dbReference type="GO" id="GO:0005634">
    <property type="term" value="C:nucleus"/>
    <property type="evidence" value="ECO:0000318"/>
    <property type="project" value="GO_Central"/>
</dbReference>
<dbReference type="GO" id="GO:0048471">
    <property type="term" value="C:perinuclear region of cytoplasm"/>
    <property type="evidence" value="ECO:0007669"/>
    <property type="project" value="UniProtKB-SubCell"/>
</dbReference>
<dbReference type="GO" id="GO:0030894">
    <property type="term" value="C:replisome"/>
    <property type="evidence" value="ECO:0007669"/>
    <property type="project" value="EnsemblFungi"/>
</dbReference>
<dbReference type="GO" id="GO:1990112">
    <property type="term" value="C:RQC complex"/>
    <property type="evidence" value="ECO:0007669"/>
    <property type="project" value="EnsemblFungi"/>
</dbReference>
<dbReference type="GO" id="GO:0034098">
    <property type="term" value="C:VCP-NPL4-UFD1 AAA ATPase complex"/>
    <property type="evidence" value="ECO:0007669"/>
    <property type="project" value="EnsemblFungi"/>
</dbReference>
<dbReference type="GO" id="GO:0036435">
    <property type="term" value="F:K48-linked polyubiquitin modification-dependent protein binding"/>
    <property type="evidence" value="ECO:0007669"/>
    <property type="project" value="EnsemblFungi"/>
</dbReference>
<dbReference type="GO" id="GO:0043130">
    <property type="term" value="F:ubiquitin binding"/>
    <property type="evidence" value="ECO:0000318"/>
    <property type="project" value="GO_Central"/>
</dbReference>
<dbReference type="GO" id="GO:0031625">
    <property type="term" value="F:ubiquitin protein ligase binding"/>
    <property type="evidence" value="ECO:0000318"/>
    <property type="project" value="GO_Central"/>
</dbReference>
<dbReference type="GO" id="GO:0071629">
    <property type="term" value="P:cytoplasm protein quality control by the ubiquitin-proteasome system"/>
    <property type="evidence" value="ECO:0007669"/>
    <property type="project" value="EnsemblFungi"/>
</dbReference>
<dbReference type="GO" id="GO:0006274">
    <property type="term" value="P:DNA replication termination"/>
    <property type="evidence" value="ECO:0007669"/>
    <property type="project" value="EnsemblFungi"/>
</dbReference>
<dbReference type="GO" id="GO:0099638">
    <property type="term" value="P:endosome to plasma membrane protein transport"/>
    <property type="evidence" value="ECO:0007669"/>
    <property type="project" value="EnsemblFungi"/>
</dbReference>
<dbReference type="GO" id="GO:0072671">
    <property type="term" value="P:mitochondria-associated ubiquitin-dependent protein catabolic process"/>
    <property type="evidence" value="ECO:0007669"/>
    <property type="project" value="EnsemblFungi"/>
</dbReference>
<dbReference type="GO" id="GO:0051228">
    <property type="term" value="P:mitotic spindle disassembly"/>
    <property type="evidence" value="ECO:0007669"/>
    <property type="project" value="EnsemblFungi"/>
</dbReference>
<dbReference type="GO" id="GO:0051028">
    <property type="term" value="P:mRNA transport"/>
    <property type="evidence" value="ECO:0007669"/>
    <property type="project" value="UniProtKB-KW"/>
</dbReference>
<dbReference type="GO" id="GO:0070651">
    <property type="term" value="P:nonfunctional rRNA decay"/>
    <property type="evidence" value="ECO:0007669"/>
    <property type="project" value="EnsemblFungi"/>
</dbReference>
<dbReference type="GO" id="GO:1900182">
    <property type="term" value="P:positive regulation of protein localization to nucleus"/>
    <property type="evidence" value="ECO:0007669"/>
    <property type="project" value="EnsemblFungi"/>
</dbReference>
<dbReference type="GO" id="GO:0072665">
    <property type="term" value="P:protein localization to vacuole"/>
    <property type="evidence" value="ECO:0007669"/>
    <property type="project" value="EnsemblFungi"/>
</dbReference>
<dbReference type="GO" id="GO:0030970">
    <property type="term" value="P:retrograde protein transport, ER to cytosol"/>
    <property type="evidence" value="ECO:0007669"/>
    <property type="project" value="EnsemblFungi"/>
</dbReference>
<dbReference type="GO" id="GO:1990116">
    <property type="term" value="P:ribosome-associated ubiquitin-dependent protein catabolic process"/>
    <property type="evidence" value="ECO:0007669"/>
    <property type="project" value="EnsemblFungi"/>
</dbReference>
<dbReference type="GO" id="GO:0006511">
    <property type="term" value="P:ubiquitin-dependent protein catabolic process"/>
    <property type="evidence" value="ECO:0000318"/>
    <property type="project" value="GO_Central"/>
</dbReference>
<dbReference type="CDD" id="cd08061">
    <property type="entry name" value="MPN_NPL4"/>
    <property type="match status" value="1"/>
</dbReference>
<dbReference type="FunFam" id="3.10.20.90:FF:000243">
    <property type="entry name" value="Nuclear protein localization protein 4"/>
    <property type="match status" value="1"/>
</dbReference>
<dbReference type="Gene3D" id="3.10.20.90">
    <property type="entry name" value="Phosphatidylinositol 3-kinase Catalytic Subunit, Chain A, domain 1"/>
    <property type="match status" value="1"/>
</dbReference>
<dbReference type="InterPro" id="IPR037518">
    <property type="entry name" value="MPN"/>
</dbReference>
<dbReference type="InterPro" id="IPR016563">
    <property type="entry name" value="Npl4"/>
</dbReference>
<dbReference type="InterPro" id="IPR007717">
    <property type="entry name" value="NPL4_C"/>
</dbReference>
<dbReference type="InterPro" id="IPR007716">
    <property type="entry name" value="NPL4_Zn-bd_put"/>
</dbReference>
<dbReference type="PANTHER" id="PTHR12710">
    <property type="entry name" value="NUCLEAR PROTEIN LOCALIZATION 4"/>
    <property type="match status" value="1"/>
</dbReference>
<dbReference type="PANTHER" id="PTHR12710:SF0">
    <property type="entry name" value="NUCLEAR PROTEIN LOCALIZATION PROTEIN 4 HOMOLOG"/>
    <property type="match status" value="1"/>
</dbReference>
<dbReference type="Pfam" id="PF05021">
    <property type="entry name" value="NPL4"/>
    <property type="match status" value="1"/>
</dbReference>
<dbReference type="Pfam" id="PF05020">
    <property type="entry name" value="zf-NPL4"/>
    <property type="match status" value="1"/>
</dbReference>
<dbReference type="PIRSF" id="PIRSF010052">
    <property type="entry name" value="Polyub_prc_Npl4"/>
    <property type="match status" value="1"/>
</dbReference>
<dbReference type="PROSITE" id="PS50249">
    <property type="entry name" value="MPN"/>
    <property type="match status" value="1"/>
</dbReference>
<gene>
    <name type="primary">NPL4</name>
    <name type="ordered locus">YALI0E13233g</name>
</gene>
<proteinExistence type="inferred from homology"/>
<reference key="1">
    <citation type="journal article" date="2004" name="Nature">
        <title>Genome evolution in yeasts.</title>
        <authorList>
            <person name="Dujon B."/>
            <person name="Sherman D."/>
            <person name="Fischer G."/>
            <person name="Durrens P."/>
            <person name="Casaregola S."/>
            <person name="Lafontaine I."/>
            <person name="de Montigny J."/>
            <person name="Marck C."/>
            <person name="Neuveglise C."/>
            <person name="Talla E."/>
            <person name="Goffard N."/>
            <person name="Frangeul L."/>
            <person name="Aigle M."/>
            <person name="Anthouard V."/>
            <person name="Babour A."/>
            <person name="Barbe V."/>
            <person name="Barnay S."/>
            <person name="Blanchin S."/>
            <person name="Beckerich J.-M."/>
            <person name="Beyne E."/>
            <person name="Bleykasten C."/>
            <person name="Boisrame A."/>
            <person name="Boyer J."/>
            <person name="Cattolico L."/>
            <person name="Confanioleri F."/>
            <person name="de Daruvar A."/>
            <person name="Despons L."/>
            <person name="Fabre E."/>
            <person name="Fairhead C."/>
            <person name="Ferry-Dumazet H."/>
            <person name="Groppi A."/>
            <person name="Hantraye F."/>
            <person name="Hennequin C."/>
            <person name="Jauniaux N."/>
            <person name="Joyet P."/>
            <person name="Kachouri R."/>
            <person name="Kerrest A."/>
            <person name="Koszul R."/>
            <person name="Lemaire M."/>
            <person name="Lesur I."/>
            <person name="Ma L."/>
            <person name="Muller H."/>
            <person name="Nicaud J.-M."/>
            <person name="Nikolski M."/>
            <person name="Oztas S."/>
            <person name="Ozier-Kalogeropoulos O."/>
            <person name="Pellenz S."/>
            <person name="Potier S."/>
            <person name="Richard G.-F."/>
            <person name="Straub M.-L."/>
            <person name="Suleau A."/>
            <person name="Swennen D."/>
            <person name="Tekaia F."/>
            <person name="Wesolowski-Louvel M."/>
            <person name="Westhof E."/>
            <person name="Wirth B."/>
            <person name="Zeniou-Meyer M."/>
            <person name="Zivanovic Y."/>
            <person name="Bolotin-Fukuhara M."/>
            <person name="Thierry A."/>
            <person name="Bouchier C."/>
            <person name="Caudron B."/>
            <person name="Scarpelli C."/>
            <person name="Gaillardin C."/>
            <person name="Weissenbach J."/>
            <person name="Wincker P."/>
            <person name="Souciet J.-L."/>
        </authorList>
    </citation>
    <scope>NUCLEOTIDE SEQUENCE [LARGE SCALE GENOMIC DNA]</scope>
    <source>
        <strain>CLIB 122 / E 150</strain>
    </source>
</reference>
<accession>Q6C619</accession>
<sequence>MILRFRSKKGTLRAEAQPTDLFDVAFKKLTEDLPDIDPATITLATSPTGKQEPASRLLGKTVQKLGLNHGDMLFVSYTDSAPRAAVEAVTAETAPQMTAAHIRDATKQLPVDDYLEKQDGKIKRQLSALQQRKFGSRGMGEDTLPVDPWDEEYLKEQKIKHMSYHAYVKKLNSQANKKNGGGYIAPLNVSDFGVSKSCTGAHAPWPEGICSRCQPSAITLQSQPFRMVDHVEFAESGMINSFIEPWRQSGTQRIGWMYGHYEPYELVPLGIKAVVEAIYEPAQSGEYDGITITEITQADGQPQPPHIATAEACGLVPLGVIFTDLVDAGNGDGSVICKRHADSYFLSSLEVAFAGAMQARFPNKSRWSPTSEFSSKFVTAVISGNPKGEIDVSCYQVSEQCEAMARADLIEPSINPSVLLVKEATKTRYVPDVFYKKNNEYGRTVLQGANPQLPVDYMLVTLTHGFPQDPRPLFSSGLSSFPVENRELIGVTQSPQALGKALDSGSAGGAVSNFHLLSYIQSMGVLSAEEFQLLAKVATEKKDEDVSRLVASEGWNNLLLIIQ</sequence>
<evidence type="ECO:0000250" key="1"/>
<evidence type="ECO:0000255" key="2">
    <source>
        <dbReference type="PROSITE-ProRule" id="PRU01182"/>
    </source>
</evidence>
<evidence type="ECO:0000305" key="3"/>
<keyword id="KW-0963">Cytoplasm</keyword>
<keyword id="KW-0256">Endoplasmic reticulum</keyword>
<keyword id="KW-0472">Membrane</keyword>
<keyword id="KW-0509">mRNA transport</keyword>
<keyword id="KW-0539">Nucleus</keyword>
<keyword id="KW-0653">Protein transport</keyword>
<keyword id="KW-1185">Reference proteome</keyword>
<keyword id="KW-0811">Translocation</keyword>
<keyword id="KW-0813">Transport</keyword>
<protein>
    <recommendedName>
        <fullName>Nuclear protein localization protein 4</fullName>
    </recommendedName>
</protein>
<organism>
    <name type="scientific">Yarrowia lipolytica (strain CLIB 122 / E 150)</name>
    <name type="common">Yeast</name>
    <name type="synonym">Candida lipolytica</name>
    <dbReference type="NCBI Taxonomy" id="284591"/>
    <lineage>
        <taxon>Eukaryota</taxon>
        <taxon>Fungi</taxon>
        <taxon>Dikarya</taxon>
        <taxon>Ascomycota</taxon>
        <taxon>Saccharomycotina</taxon>
        <taxon>Dipodascomycetes</taxon>
        <taxon>Dipodascales</taxon>
        <taxon>Dipodascales incertae sedis</taxon>
        <taxon>Yarrowia</taxon>
    </lineage>
</organism>